<dbReference type="EMBL" id="CR543861">
    <property type="protein sequence ID" value="CAG67855.1"/>
    <property type="molecule type" value="Genomic_DNA"/>
</dbReference>
<dbReference type="SMR" id="Q6FDK3"/>
<dbReference type="STRING" id="202950.GCA_001485005_01395"/>
<dbReference type="KEGG" id="aci:ACIAD0962"/>
<dbReference type="eggNOG" id="COG1051">
    <property type="taxonomic scope" value="Bacteria"/>
</dbReference>
<dbReference type="HOGENOM" id="CLU_037162_3_3_6"/>
<dbReference type="OrthoDB" id="542521at2"/>
<dbReference type="BioCyc" id="ASP62977:ACIAD_RS04435-MONOMER"/>
<dbReference type="Proteomes" id="UP000000430">
    <property type="component" value="Chromosome"/>
</dbReference>
<dbReference type="GO" id="GO:0003824">
    <property type="term" value="F:catalytic activity"/>
    <property type="evidence" value="ECO:0007669"/>
    <property type="project" value="UniProtKB-ARBA"/>
</dbReference>
<dbReference type="GO" id="GO:0003677">
    <property type="term" value="F:DNA binding"/>
    <property type="evidence" value="ECO:0007669"/>
    <property type="project" value="UniProtKB-KW"/>
</dbReference>
<dbReference type="CDD" id="cd18873">
    <property type="entry name" value="NUDIX_NadM_like"/>
    <property type="match status" value="1"/>
</dbReference>
<dbReference type="Gene3D" id="3.90.79.10">
    <property type="entry name" value="Nucleoside Triphosphate Pyrophosphohydrolase"/>
    <property type="match status" value="1"/>
</dbReference>
<dbReference type="Gene3D" id="1.10.10.10">
    <property type="entry name" value="Winged helix-like DNA-binding domain superfamily/Winged helix DNA-binding domain"/>
    <property type="match status" value="1"/>
</dbReference>
<dbReference type="InterPro" id="IPR054105">
    <property type="entry name" value="NrtR_WHD"/>
</dbReference>
<dbReference type="InterPro" id="IPR015797">
    <property type="entry name" value="NUDIX_hydrolase-like_dom_sf"/>
</dbReference>
<dbReference type="InterPro" id="IPR000086">
    <property type="entry name" value="NUDIX_hydrolase_dom"/>
</dbReference>
<dbReference type="InterPro" id="IPR036388">
    <property type="entry name" value="WH-like_DNA-bd_sf"/>
</dbReference>
<dbReference type="InterPro" id="IPR036390">
    <property type="entry name" value="WH_DNA-bd_sf"/>
</dbReference>
<dbReference type="PANTHER" id="PTHR43736">
    <property type="entry name" value="ADP-RIBOSE PYROPHOSPHATASE"/>
    <property type="match status" value="1"/>
</dbReference>
<dbReference type="PANTHER" id="PTHR43736:SF4">
    <property type="entry name" value="SLR1690 PROTEIN"/>
    <property type="match status" value="1"/>
</dbReference>
<dbReference type="Pfam" id="PF21906">
    <property type="entry name" value="NrtR_WHD"/>
    <property type="match status" value="1"/>
</dbReference>
<dbReference type="Pfam" id="PF00293">
    <property type="entry name" value="NUDIX"/>
    <property type="match status" value="1"/>
</dbReference>
<dbReference type="SUPFAM" id="SSF55811">
    <property type="entry name" value="Nudix"/>
    <property type="match status" value="1"/>
</dbReference>
<dbReference type="SUPFAM" id="SSF46785">
    <property type="entry name" value="Winged helix' DNA-binding domain"/>
    <property type="match status" value="1"/>
</dbReference>
<dbReference type="PROSITE" id="PS51462">
    <property type="entry name" value="NUDIX"/>
    <property type="match status" value="1"/>
</dbReference>
<evidence type="ECO:0000255" key="1">
    <source>
        <dbReference type="PROSITE-ProRule" id="PRU00794"/>
    </source>
</evidence>
<evidence type="ECO:0000269" key="2">
    <source>
    </source>
</evidence>
<evidence type="ECO:0000303" key="3">
    <source>
    </source>
</evidence>
<evidence type="ECO:0000305" key="4"/>
<evidence type="ECO:0000312" key="5">
    <source>
        <dbReference type="EMBL" id="CAG67855.1"/>
    </source>
</evidence>
<gene>
    <name evidence="5" type="ordered locus">ACIAD0962</name>
</gene>
<name>NRTR_ACIAD</name>
<proteinExistence type="evidence at protein level"/>
<reference key="1">
    <citation type="journal article" date="2004" name="Nucleic Acids Res.">
        <title>Unique features revealed by the genome sequence of Acinetobacter sp. ADP1, a versatile and naturally transformation competent bacterium.</title>
        <authorList>
            <person name="Barbe V."/>
            <person name="Vallenet D."/>
            <person name="Fonknechten N."/>
            <person name="Kreimeyer A."/>
            <person name="Oztas S."/>
            <person name="Labarre L."/>
            <person name="Cruveiller S."/>
            <person name="Robert C."/>
            <person name="Duprat S."/>
            <person name="Wincker P."/>
            <person name="Ornston L.N."/>
            <person name="Weissenbach J."/>
            <person name="Marliere P."/>
            <person name="Cohen G.N."/>
            <person name="Medigue C."/>
        </authorList>
    </citation>
    <scope>NUCLEOTIDE SEQUENCE [LARGE SCALE GENOMIC DNA]</scope>
    <source>
        <strain>ATCC 33305 / BD413 / ADP1</strain>
    </source>
</reference>
<reference key="2">
    <citation type="journal article" date="2010" name="J. Biol. Chem.">
        <title>Genomics-driven reconstruction of acinetobacter NAD metabolism: insights for antibacterial target selection.</title>
        <authorList>
            <person name="Sorci L."/>
            <person name="Blaby I."/>
            <person name="De Ingeniis J."/>
            <person name="Gerdes S."/>
            <person name="Raffaelli N."/>
            <person name="de Crecy Lagard V."/>
            <person name="Osterman A."/>
        </authorList>
    </citation>
    <scope>FUNCTION</scope>
    <scope>DNA-BINDING</scope>
    <scope>ACTIVITY REGULATION</scope>
    <scope>DISRUPTION PHENOTYPE</scope>
    <source>
        <strain>ATCC 33305 / BD413 / ADP1</strain>
    </source>
</reference>
<comment type="function">
    <text evidence="2">Involved in the transcriptional regulation of the nondeamidating salvage pathway for production of NAD from nicotinamide (PubMed:20926389). Represses expression of the prs-nadV-nrtR operon by binding to the DNA region located upstream of the operon, thus blocking the nondeamidating pathway (PubMed:20926389).</text>
</comment>
<comment type="activity regulation">
    <text evidence="2">DNA binding is efficiently suppressed in the presence of ADP-ribose (ADPR) or phospho-ADPR (PubMed:20926389). Accumulation of ADPR resulting from NAD degradation may be interpreted by the cell as a signal to activate recycling of nicotinamide (PubMed:20926389).</text>
</comment>
<comment type="disruption phenotype">
    <text evidence="2">Deletion of the gene leads to a 150-fold increase of the basal level of nadV expression.</text>
</comment>
<accession>Q6FDK3</accession>
<keyword id="KW-0238">DNA-binding</keyword>
<keyword id="KW-0678">Repressor</keyword>
<keyword id="KW-0804">Transcription</keyword>
<keyword id="KW-0805">Transcription regulation</keyword>
<organism>
    <name type="scientific">Acinetobacter baylyi (strain ATCC 33305 / BD413 / ADP1)</name>
    <dbReference type="NCBI Taxonomy" id="62977"/>
    <lineage>
        <taxon>Bacteria</taxon>
        <taxon>Pseudomonadati</taxon>
        <taxon>Pseudomonadota</taxon>
        <taxon>Gammaproteobacteria</taxon>
        <taxon>Moraxellales</taxon>
        <taxon>Moraxellaceae</taxon>
        <taxon>Acinetobacter</taxon>
    </lineage>
</organism>
<sequence>MSLRVNFSSEQAFLAQYQKSDYPSPLMTVDMAIFSVDQGQLQILLIQRSNYPQKSYWALPGGFVDLEQDQNLMACAHRKLLEKTGIDSPYLEQVASIGNAKRDPRGWSVTVLYFALINFKAYQQQIQHSEHSEWVTLEQALKLDLAFDHHDLLQQAFARLNNKTRYTALPISLMPPLFTLTELQNIYEIILGHNLEKKAFRRRMIESGVVEETDQSKIAGKRPAQLYRFALQDYDFNFPRMLEYPRHHED</sequence>
<feature type="chain" id="PRO_0000457837" description="ADPR responsive transcriptional repressor NtrR">
    <location>
        <begin position="1"/>
        <end position="250"/>
    </location>
</feature>
<feature type="domain" description="Nudix hydrolase" evidence="1">
    <location>
        <begin position="26"/>
        <end position="157"/>
    </location>
</feature>
<feature type="region of interest" description="Winged helix-like DNA-binding region" evidence="4">
    <location>
        <begin position="164"/>
        <end position="237"/>
    </location>
</feature>
<feature type="short sequence motif" description="Nudix box" evidence="1">
    <location>
        <begin position="62"/>
        <end position="85"/>
    </location>
</feature>
<protein>
    <recommendedName>
        <fullName evidence="3">ADPR responsive transcriptional repressor NtrR</fullName>
    </recommendedName>
    <alternativeName>
        <fullName evidence="4">Nudix-related transcription repressor</fullName>
    </alternativeName>
</protein>